<comment type="function">
    <text evidence="1">Catalyzes the removal of a penultimate prolyl residue from the N-termini of peptides.</text>
</comment>
<comment type="catalytic activity">
    <reaction>
        <text>Release of any N-terminal amino acid, including proline, that is linked to proline, even from a dipeptide or tripeptide.</text>
        <dbReference type="EC" id="3.4.11.9"/>
    </reaction>
</comment>
<comment type="cofactor">
    <cofactor evidence="1">
        <name>Mn(2+)</name>
        <dbReference type="ChEBI" id="CHEBI:29035"/>
    </cofactor>
    <text evidence="1">Binds 2 manganese ions per subunit.</text>
</comment>
<comment type="similarity">
    <text evidence="2">Belongs to the peptidase M24B family.</text>
</comment>
<name>AMPP1_SORMK</name>
<proteinExistence type="inferred from homology"/>
<sequence length="614" mass="67883">MTVNTTDRLAALRSLMKERSVDIYVVPSEDSHASEYITDCDARRTFISGFSGSAGTAVVTLDKAALATDGRYFNQASKQLDENWHLLKTGLQDVPTWQEWTADESAGGKTVGIDPTLISPAVAEKLNGDIKKHGGSGLKAVTENLVDLVWGESRPPRPSEPVFLLGAKYAGKGAAEKLTDLRKELEKKKAAAFVVSMLDEIAWLFNLRGNDITYNPVFFSYAIVTKDSATLYVDESKLTDEVKQYLAENGTEIKPYTDLFKDTEVLANAAKSTSESEKPTKYLVSNKASWALKLALGGEKHVDEVRSPIGDAKAIKNETELEGMRKCHIRDGAALIKYFAWLEDQLVNKKAKLNEVEAADQLEKFRSEQSDFVGLSFDTISSTGPNGAIIHYKPERGACSVIDPNAIYLCDSGAQFYDGTTDVTRTLHFGQPTAAEKKSYTLVLKGNIALDTAVFPKGTSGFALDALARQFLWKYGLDYRHGTGHGVGSFLNVHEGPIGIGTRKAYIDVPLAPGNVLSIEPGYYEDGNYGIRIENLAIVREVKTEHQFGDKPYLGFEHITMVPYCRKLIDESLLTQEEKDWLNKSNEEIRKNMAGYFDGDQLTTDWLLRETSPF</sequence>
<evidence type="ECO:0000250" key="1"/>
<evidence type="ECO:0000305" key="2"/>
<reference key="1">
    <citation type="journal article" date="2010" name="PLoS Genet.">
        <title>De novo assembly of a 40 Mb eukaryotic genome from short sequence reads: Sordaria macrospora, a model organism for fungal morphogenesis.</title>
        <authorList>
            <person name="Nowrousian M."/>
            <person name="Stajich J.E."/>
            <person name="Chu M."/>
            <person name="Engh I."/>
            <person name="Espagne E."/>
            <person name="Halliday K."/>
            <person name="Kamerewerd J."/>
            <person name="Kempken F."/>
            <person name="Knab B."/>
            <person name="Kuo H.-C."/>
            <person name="Osiewacz H.D."/>
            <person name="Poeggeler S."/>
            <person name="Read N.D."/>
            <person name="Seiler S."/>
            <person name="Smith K.M."/>
            <person name="Zickler D."/>
            <person name="Kueck U."/>
            <person name="Freitag M."/>
        </authorList>
    </citation>
    <scope>NUCLEOTIDE SEQUENCE [LARGE SCALE GENOMIC DNA]</scope>
    <source>
        <strain>ATCC MYA-333 / DSM 997 / K(L3346) / K-hell</strain>
    </source>
</reference>
<keyword id="KW-0031">Aminopeptidase</keyword>
<keyword id="KW-0378">Hydrolase</keyword>
<keyword id="KW-0464">Manganese</keyword>
<keyword id="KW-0479">Metal-binding</keyword>
<keyword id="KW-0482">Metalloprotease</keyword>
<keyword id="KW-0645">Protease</keyword>
<keyword id="KW-1185">Reference proteome</keyword>
<feature type="chain" id="PRO_0000411810" description="Probable Xaa-Pro aminopeptidase P">
    <location>
        <begin position="1"/>
        <end position="614"/>
    </location>
</feature>
<feature type="binding site" evidence="1">
    <location>
        <position position="411"/>
    </location>
    <ligand>
        <name>Mn(2+)</name>
        <dbReference type="ChEBI" id="CHEBI:29035"/>
        <label>2</label>
    </ligand>
</feature>
<feature type="binding site" evidence="1">
    <location>
        <position position="422"/>
    </location>
    <ligand>
        <name>Mn(2+)</name>
        <dbReference type="ChEBI" id="CHEBI:29035"/>
        <label>1</label>
    </ligand>
</feature>
<feature type="binding site" evidence="1">
    <location>
        <position position="422"/>
    </location>
    <ligand>
        <name>Mn(2+)</name>
        <dbReference type="ChEBI" id="CHEBI:29035"/>
        <label>2</label>
    </ligand>
</feature>
<feature type="binding site" evidence="1">
    <location>
        <position position="520"/>
    </location>
    <ligand>
        <name>Mn(2+)</name>
        <dbReference type="ChEBI" id="CHEBI:29035"/>
        <label>1</label>
    </ligand>
</feature>
<feature type="binding site" evidence="1">
    <location>
        <position position="534"/>
    </location>
    <ligand>
        <name>Mn(2+)</name>
        <dbReference type="ChEBI" id="CHEBI:29035"/>
        <label>1</label>
    </ligand>
</feature>
<feature type="binding site" evidence="1">
    <location>
        <position position="534"/>
    </location>
    <ligand>
        <name>Mn(2+)</name>
        <dbReference type="ChEBI" id="CHEBI:29035"/>
        <label>2</label>
    </ligand>
</feature>
<gene>
    <name type="primary">AMPP</name>
    <name type="ORF">SMAC_08089</name>
</gene>
<accession>D1ZKF3</accession>
<accession>F7W9H7</accession>
<protein>
    <recommendedName>
        <fullName>Probable Xaa-Pro aminopeptidase P</fullName>
        <shortName>AMPP</shortName>
        <shortName>Aminopeptidase P</shortName>
        <ecNumber>3.4.11.9</ecNumber>
    </recommendedName>
    <alternativeName>
        <fullName>Aminoacylproline aminopeptidase</fullName>
    </alternativeName>
    <alternativeName>
        <fullName>Prolidase</fullName>
    </alternativeName>
</protein>
<organism>
    <name type="scientific">Sordaria macrospora (strain ATCC MYA-333 / DSM 997 / K(L3346) / K-hell)</name>
    <dbReference type="NCBI Taxonomy" id="771870"/>
    <lineage>
        <taxon>Eukaryota</taxon>
        <taxon>Fungi</taxon>
        <taxon>Dikarya</taxon>
        <taxon>Ascomycota</taxon>
        <taxon>Pezizomycotina</taxon>
        <taxon>Sordariomycetes</taxon>
        <taxon>Sordariomycetidae</taxon>
        <taxon>Sordariales</taxon>
        <taxon>Sordariaceae</taxon>
        <taxon>Sordaria</taxon>
    </lineage>
</organism>
<dbReference type="EC" id="3.4.11.9"/>
<dbReference type="EMBL" id="CABT02000052">
    <property type="protein sequence ID" value="CCC13968.1"/>
    <property type="molecule type" value="Genomic_DNA"/>
</dbReference>
<dbReference type="RefSeq" id="XP_003347197.1">
    <property type="nucleotide sequence ID" value="XM_003347149.1"/>
</dbReference>
<dbReference type="SMR" id="D1ZKF3"/>
<dbReference type="FunCoup" id="D1ZKF3">
    <property type="interactions" value="369"/>
</dbReference>
<dbReference type="STRING" id="771870.D1ZKF3"/>
<dbReference type="MEROPS" id="M24.A10"/>
<dbReference type="GeneID" id="10804617"/>
<dbReference type="KEGG" id="smp:10804617"/>
<dbReference type="VEuPathDB" id="FungiDB:SMAC_08089"/>
<dbReference type="eggNOG" id="KOG2413">
    <property type="taxonomic scope" value="Eukaryota"/>
</dbReference>
<dbReference type="HOGENOM" id="CLU_011781_2_3_1"/>
<dbReference type="InParanoid" id="D1ZKF3"/>
<dbReference type="OMA" id="EPGMILS"/>
<dbReference type="OrthoDB" id="9995434at2759"/>
<dbReference type="Proteomes" id="UP000001881">
    <property type="component" value="Unassembled WGS sequence"/>
</dbReference>
<dbReference type="GO" id="GO:0005737">
    <property type="term" value="C:cytoplasm"/>
    <property type="evidence" value="ECO:0007669"/>
    <property type="project" value="UniProtKB-ARBA"/>
</dbReference>
<dbReference type="GO" id="GO:0046872">
    <property type="term" value="F:metal ion binding"/>
    <property type="evidence" value="ECO:0007669"/>
    <property type="project" value="UniProtKB-KW"/>
</dbReference>
<dbReference type="GO" id="GO:0070006">
    <property type="term" value="F:metalloaminopeptidase activity"/>
    <property type="evidence" value="ECO:0007669"/>
    <property type="project" value="InterPro"/>
</dbReference>
<dbReference type="GO" id="GO:0006508">
    <property type="term" value="P:proteolysis"/>
    <property type="evidence" value="ECO:0007669"/>
    <property type="project" value="UniProtKB-KW"/>
</dbReference>
<dbReference type="CDD" id="cd01085">
    <property type="entry name" value="APP"/>
    <property type="match status" value="1"/>
</dbReference>
<dbReference type="FunFam" id="3.40.350.10:FF:000010">
    <property type="entry name" value="Probable Xaa-Pro aminopeptidase P"/>
    <property type="match status" value="1"/>
</dbReference>
<dbReference type="FunFam" id="3.90.230.10:FF:000007">
    <property type="entry name" value="Xaa-Pro aminopeptidase P"/>
    <property type="match status" value="1"/>
</dbReference>
<dbReference type="FunFam" id="3.40.350.10:FF:000003">
    <property type="entry name" value="Xaa-pro aminopeptidase P"/>
    <property type="match status" value="1"/>
</dbReference>
<dbReference type="Gene3D" id="3.90.230.10">
    <property type="entry name" value="Creatinase/methionine aminopeptidase superfamily"/>
    <property type="match status" value="1"/>
</dbReference>
<dbReference type="Gene3D" id="3.40.350.10">
    <property type="entry name" value="Creatinase/prolidase N-terminal domain"/>
    <property type="match status" value="2"/>
</dbReference>
<dbReference type="InterPro" id="IPR029149">
    <property type="entry name" value="Creatin/AminoP/Spt16_N"/>
</dbReference>
<dbReference type="InterPro" id="IPR036005">
    <property type="entry name" value="Creatinase/aminopeptidase-like"/>
</dbReference>
<dbReference type="InterPro" id="IPR000587">
    <property type="entry name" value="Creatinase_N"/>
</dbReference>
<dbReference type="InterPro" id="IPR000994">
    <property type="entry name" value="Pept_M24"/>
</dbReference>
<dbReference type="InterPro" id="IPR033740">
    <property type="entry name" value="Pept_M24B"/>
</dbReference>
<dbReference type="InterPro" id="IPR032416">
    <property type="entry name" value="Peptidase_M24_C"/>
</dbReference>
<dbReference type="InterPro" id="IPR001131">
    <property type="entry name" value="Peptidase_M24B_aminopep-P_CS"/>
</dbReference>
<dbReference type="InterPro" id="IPR050422">
    <property type="entry name" value="X-Pro_aminopeptidase_P"/>
</dbReference>
<dbReference type="PANTHER" id="PTHR43763">
    <property type="entry name" value="XAA-PRO AMINOPEPTIDASE 1"/>
    <property type="match status" value="1"/>
</dbReference>
<dbReference type="PANTHER" id="PTHR43763:SF6">
    <property type="entry name" value="XAA-PRO AMINOPEPTIDASE 1"/>
    <property type="match status" value="1"/>
</dbReference>
<dbReference type="Pfam" id="PF01321">
    <property type="entry name" value="Creatinase_N"/>
    <property type="match status" value="1"/>
</dbReference>
<dbReference type="Pfam" id="PF16189">
    <property type="entry name" value="Creatinase_N_2"/>
    <property type="match status" value="1"/>
</dbReference>
<dbReference type="Pfam" id="PF00557">
    <property type="entry name" value="Peptidase_M24"/>
    <property type="match status" value="1"/>
</dbReference>
<dbReference type="Pfam" id="PF16188">
    <property type="entry name" value="Peptidase_M24_C"/>
    <property type="match status" value="1"/>
</dbReference>
<dbReference type="SUPFAM" id="SSF55920">
    <property type="entry name" value="Creatinase/aminopeptidase"/>
    <property type="match status" value="1"/>
</dbReference>
<dbReference type="SUPFAM" id="SSF53092">
    <property type="entry name" value="Creatinase/prolidase N-terminal domain"/>
    <property type="match status" value="1"/>
</dbReference>
<dbReference type="PROSITE" id="PS00491">
    <property type="entry name" value="PROLINE_PEPTIDASE"/>
    <property type="match status" value="1"/>
</dbReference>